<proteinExistence type="inferred from homology"/>
<feature type="chain" id="PRO_0000257675" description="Biosynthetic peptidoglycan transglycosylase">
    <location>
        <begin position="1"/>
        <end position="233"/>
    </location>
</feature>
<feature type="transmembrane region" description="Helical" evidence="1">
    <location>
        <begin position="8"/>
        <end position="28"/>
    </location>
</feature>
<comment type="function">
    <text evidence="1">Peptidoglycan polymerase that catalyzes glycan chain elongation from lipid-linked precursors.</text>
</comment>
<comment type="catalytic activity">
    <reaction evidence="1">
        <text>[GlcNAc-(1-&gt;4)-Mur2Ac(oyl-L-Ala-gamma-D-Glu-L-Lys-D-Ala-D-Ala)](n)-di-trans,octa-cis-undecaprenyl diphosphate + beta-D-GlcNAc-(1-&gt;4)-Mur2Ac(oyl-L-Ala-gamma-D-Glu-L-Lys-D-Ala-D-Ala)-di-trans,octa-cis-undecaprenyl diphosphate = [GlcNAc-(1-&gt;4)-Mur2Ac(oyl-L-Ala-gamma-D-Glu-L-Lys-D-Ala-D-Ala)](n+1)-di-trans,octa-cis-undecaprenyl diphosphate + di-trans,octa-cis-undecaprenyl diphosphate + H(+)</text>
        <dbReference type="Rhea" id="RHEA:23708"/>
        <dbReference type="Rhea" id="RHEA-COMP:9602"/>
        <dbReference type="Rhea" id="RHEA-COMP:9603"/>
        <dbReference type="ChEBI" id="CHEBI:15378"/>
        <dbReference type="ChEBI" id="CHEBI:58405"/>
        <dbReference type="ChEBI" id="CHEBI:60033"/>
        <dbReference type="ChEBI" id="CHEBI:78435"/>
        <dbReference type="EC" id="2.4.99.28"/>
    </reaction>
</comment>
<comment type="pathway">
    <text evidence="1">Cell wall biogenesis; peptidoglycan biosynthesis.</text>
</comment>
<comment type="subcellular location">
    <subcellularLocation>
        <location evidence="1">Cell inner membrane</location>
        <topology evidence="1">Single-pass membrane protein</topology>
    </subcellularLocation>
</comment>
<comment type="similarity">
    <text evidence="1">Belongs to the glycosyltransferase 51 family.</text>
</comment>
<organism>
    <name type="scientific">Neisseria gonorrhoeae (strain ATCC 700825 / FA 1090)</name>
    <dbReference type="NCBI Taxonomy" id="242231"/>
    <lineage>
        <taxon>Bacteria</taxon>
        <taxon>Pseudomonadati</taxon>
        <taxon>Pseudomonadota</taxon>
        <taxon>Betaproteobacteria</taxon>
        <taxon>Neisseriales</taxon>
        <taxon>Neisseriaceae</taxon>
        <taxon>Neisseria</taxon>
    </lineage>
</organism>
<protein>
    <recommendedName>
        <fullName evidence="1">Biosynthetic peptidoglycan transglycosylase</fullName>
        <ecNumber evidence="1">2.4.99.28</ecNumber>
    </recommendedName>
    <alternativeName>
        <fullName evidence="1">Glycan polymerase</fullName>
    </alternativeName>
    <alternativeName>
        <fullName evidence="1">Peptidoglycan glycosyltransferase MtgA</fullName>
        <shortName evidence="1">PGT</shortName>
    </alternativeName>
</protein>
<name>MTGA_NEIG1</name>
<keyword id="KW-0997">Cell inner membrane</keyword>
<keyword id="KW-1003">Cell membrane</keyword>
<keyword id="KW-0133">Cell shape</keyword>
<keyword id="KW-0961">Cell wall biogenesis/degradation</keyword>
<keyword id="KW-0328">Glycosyltransferase</keyword>
<keyword id="KW-0472">Membrane</keyword>
<keyword id="KW-0573">Peptidoglycan synthesis</keyword>
<keyword id="KW-1185">Reference proteome</keyword>
<keyword id="KW-0808">Transferase</keyword>
<keyword id="KW-0812">Transmembrane</keyword>
<keyword id="KW-1133">Transmembrane helix</keyword>
<gene>
    <name evidence="1" type="primary">mtgA</name>
    <name type="ordered locus">NGO_1603</name>
</gene>
<dbReference type="EC" id="2.4.99.28" evidence="1"/>
<dbReference type="EMBL" id="AE004969">
    <property type="protein sequence ID" value="AAW90231.1"/>
    <property type="molecule type" value="Genomic_DNA"/>
</dbReference>
<dbReference type="RefSeq" id="WP_003695505.1">
    <property type="nucleotide sequence ID" value="NC_002946.2"/>
</dbReference>
<dbReference type="RefSeq" id="YP_208643.1">
    <property type="nucleotide sequence ID" value="NC_002946.2"/>
</dbReference>
<dbReference type="SMR" id="Q5F6F6"/>
<dbReference type="STRING" id="242231.NGO_1603"/>
<dbReference type="CAZy" id="GT51">
    <property type="family name" value="Glycosyltransferase Family 51"/>
</dbReference>
<dbReference type="KEGG" id="ngo:NGO_1603"/>
<dbReference type="PATRIC" id="fig|242231.10.peg.1917"/>
<dbReference type="HOGENOM" id="CLU_006354_1_0_4"/>
<dbReference type="UniPathway" id="UPA00219"/>
<dbReference type="Proteomes" id="UP000000535">
    <property type="component" value="Chromosome"/>
</dbReference>
<dbReference type="GO" id="GO:0009274">
    <property type="term" value="C:peptidoglycan-based cell wall"/>
    <property type="evidence" value="ECO:0007669"/>
    <property type="project" value="InterPro"/>
</dbReference>
<dbReference type="GO" id="GO:0005886">
    <property type="term" value="C:plasma membrane"/>
    <property type="evidence" value="ECO:0007669"/>
    <property type="project" value="UniProtKB-SubCell"/>
</dbReference>
<dbReference type="GO" id="GO:0016763">
    <property type="term" value="F:pentosyltransferase activity"/>
    <property type="evidence" value="ECO:0007669"/>
    <property type="project" value="InterPro"/>
</dbReference>
<dbReference type="GO" id="GO:0008955">
    <property type="term" value="F:peptidoglycan glycosyltransferase activity"/>
    <property type="evidence" value="ECO:0007669"/>
    <property type="project" value="UniProtKB-UniRule"/>
</dbReference>
<dbReference type="GO" id="GO:0071555">
    <property type="term" value="P:cell wall organization"/>
    <property type="evidence" value="ECO:0007669"/>
    <property type="project" value="UniProtKB-KW"/>
</dbReference>
<dbReference type="GO" id="GO:0009252">
    <property type="term" value="P:peptidoglycan biosynthetic process"/>
    <property type="evidence" value="ECO:0007669"/>
    <property type="project" value="UniProtKB-UniRule"/>
</dbReference>
<dbReference type="GO" id="GO:0008360">
    <property type="term" value="P:regulation of cell shape"/>
    <property type="evidence" value="ECO:0007669"/>
    <property type="project" value="UniProtKB-KW"/>
</dbReference>
<dbReference type="Gene3D" id="1.10.3810.10">
    <property type="entry name" value="Biosynthetic peptidoglycan transglycosylase-like"/>
    <property type="match status" value="1"/>
</dbReference>
<dbReference type="HAMAP" id="MF_00766">
    <property type="entry name" value="PGT_MtgA"/>
    <property type="match status" value="1"/>
</dbReference>
<dbReference type="InterPro" id="IPR001264">
    <property type="entry name" value="Glyco_trans_51"/>
</dbReference>
<dbReference type="InterPro" id="IPR023346">
    <property type="entry name" value="Lysozyme-like_dom_sf"/>
</dbReference>
<dbReference type="InterPro" id="IPR036950">
    <property type="entry name" value="PBP_transglycosylase"/>
</dbReference>
<dbReference type="InterPro" id="IPR011812">
    <property type="entry name" value="Pep_trsgly"/>
</dbReference>
<dbReference type="NCBIfam" id="TIGR02070">
    <property type="entry name" value="mono_pep_trsgly"/>
    <property type="match status" value="1"/>
</dbReference>
<dbReference type="PANTHER" id="PTHR30400:SF0">
    <property type="entry name" value="BIOSYNTHETIC PEPTIDOGLYCAN TRANSGLYCOSYLASE"/>
    <property type="match status" value="1"/>
</dbReference>
<dbReference type="PANTHER" id="PTHR30400">
    <property type="entry name" value="MONOFUNCTIONAL BIOSYNTHETIC PEPTIDOGLYCAN TRANSGLYCOSYLASE"/>
    <property type="match status" value="1"/>
</dbReference>
<dbReference type="Pfam" id="PF00912">
    <property type="entry name" value="Transgly"/>
    <property type="match status" value="1"/>
</dbReference>
<dbReference type="SUPFAM" id="SSF53955">
    <property type="entry name" value="Lysozyme-like"/>
    <property type="match status" value="1"/>
</dbReference>
<accession>Q5F6F6</accession>
<evidence type="ECO:0000255" key="1">
    <source>
        <dbReference type="HAMAP-Rule" id="MF_00766"/>
    </source>
</evidence>
<sequence length="233" mass="26643">MFRIVKWLIALPVGIFIFFNAYVYGNIITYRAVAPHRTAFMSMRMKQFEQEGRDVALDYRWVPYNRISTNLKKALIASEDVRFAGHGGFDWDGIQNAIRRNRNSGEVKAGGSTISQQLAKNLFLNESRNYLRKGEEAAITAMMEAVTDKNRIFELYLNSIEWHYGVFGAEAASRYFYKKPAADLTKQQAAKLTALVPAPLYYADHPKSKRLRNKTNIVLRRMGSAELPESDTD</sequence>
<reference key="1">
    <citation type="submission" date="2003-03" db="EMBL/GenBank/DDBJ databases">
        <title>The complete genome sequence of Neisseria gonorrhoeae.</title>
        <authorList>
            <person name="Lewis L.A."/>
            <person name="Gillaspy A.F."/>
            <person name="McLaughlin R.E."/>
            <person name="Gipson M."/>
            <person name="Ducey T.F."/>
            <person name="Ownbey T."/>
            <person name="Hartman K."/>
            <person name="Nydick C."/>
            <person name="Carson M.B."/>
            <person name="Vaughn J."/>
            <person name="Thomson C."/>
            <person name="Song L."/>
            <person name="Lin S."/>
            <person name="Yuan X."/>
            <person name="Najar F."/>
            <person name="Zhan M."/>
            <person name="Ren Q."/>
            <person name="Zhu H."/>
            <person name="Qi S."/>
            <person name="Kenton S.M."/>
            <person name="Lai H."/>
            <person name="White J.D."/>
            <person name="Clifton S."/>
            <person name="Roe B.A."/>
            <person name="Dyer D.W."/>
        </authorList>
    </citation>
    <scope>NUCLEOTIDE SEQUENCE [LARGE SCALE GENOMIC DNA]</scope>
    <source>
        <strain>ATCC 700825 / FA 1090</strain>
    </source>
</reference>